<proteinExistence type="inferred from homology"/>
<accession>A9AD42</accession>
<feature type="chain" id="PRO_0000410774" description="Protein phosphatase CheZ">
    <location>
        <begin position="1"/>
        <end position="243"/>
    </location>
</feature>
<feature type="region of interest" description="Disordered" evidence="2">
    <location>
        <begin position="1"/>
        <end position="23"/>
    </location>
</feature>
<feature type="region of interest" description="Disordered" evidence="2">
    <location>
        <begin position="203"/>
        <end position="227"/>
    </location>
</feature>
<feature type="site" description="Enhances dephosphorylation of CheY-P" evidence="1">
    <location>
        <position position="160"/>
    </location>
</feature>
<sequence length="243" mass="26577">MNEPIHAGPGDAPFGGDSQPEGADLASDRILARIGQLTRTLRDSMRELGLDKHVERAAEAVPDARDRLRYVATMTEQAAERVLNAIEIAKPVQERVQNEAEALDARWAQWYAAPIEHAEVRELMDDTRAFLRALPDATSATNAQLLEIMLAQDFQDLTGQVIKKIMDMVYLIEQQLLTVLVENIAPERREQFAATAAALAAEKTSATGSPESLLNGPQIAPEGKPDVVQDQAQVDDLLASLGF</sequence>
<dbReference type="EC" id="3.1.3.-"/>
<dbReference type="EMBL" id="CP000868">
    <property type="protein sequence ID" value="ABX13867.1"/>
    <property type="molecule type" value="Genomic_DNA"/>
</dbReference>
<dbReference type="EMBL" id="AP009385">
    <property type="protein sequence ID" value="BAG44967.1"/>
    <property type="molecule type" value="Genomic_DNA"/>
</dbReference>
<dbReference type="SMR" id="A9AD42"/>
<dbReference type="STRING" id="395019.BMULJ_03092"/>
<dbReference type="KEGG" id="bmj:BMULJ_03092"/>
<dbReference type="KEGG" id="bmu:Bmul_0172"/>
<dbReference type="eggNOG" id="COG3143">
    <property type="taxonomic scope" value="Bacteria"/>
</dbReference>
<dbReference type="HOGENOM" id="CLU_080718_0_0_4"/>
<dbReference type="Proteomes" id="UP000008815">
    <property type="component" value="Chromosome 1"/>
</dbReference>
<dbReference type="GO" id="GO:0009288">
    <property type="term" value="C:bacterial-type flagellum"/>
    <property type="evidence" value="ECO:0007669"/>
    <property type="project" value="InterPro"/>
</dbReference>
<dbReference type="GO" id="GO:0005737">
    <property type="term" value="C:cytoplasm"/>
    <property type="evidence" value="ECO:0007669"/>
    <property type="project" value="UniProtKB-SubCell"/>
</dbReference>
<dbReference type="GO" id="GO:0004721">
    <property type="term" value="F:phosphoprotein phosphatase activity"/>
    <property type="evidence" value="ECO:0007669"/>
    <property type="project" value="UniProtKB-KW"/>
</dbReference>
<dbReference type="GO" id="GO:0097588">
    <property type="term" value="P:archaeal or bacterial-type flagellum-dependent cell motility"/>
    <property type="evidence" value="ECO:0007669"/>
    <property type="project" value="UniProtKB-KW"/>
</dbReference>
<dbReference type="GO" id="GO:0006935">
    <property type="term" value="P:chemotaxis"/>
    <property type="evidence" value="ECO:0007669"/>
    <property type="project" value="UniProtKB-KW"/>
</dbReference>
<dbReference type="GO" id="GO:0050920">
    <property type="term" value="P:regulation of chemotaxis"/>
    <property type="evidence" value="ECO:0007669"/>
    <property type="project" value="InterPro"/>
</dbReference>
<dbReference type="Gene3D" id="1.10.287.500">
    <property type="entry name" value="Helix hairpin bin"/>
    <property type="match status" value="1"/>
</dbReference>
<dbReference type="Gene3D" id="1.20.5.590">
    <property type="entry name" value="Single helix bin"/>
    <property type="match status" value="1"/>
</dbReference>
<dbReference type="InterPro" id="IPR007439">
    <property type="entry name" value="Chemotax_Pase_CheZ"/>
</dbReference>
<dbReference type="InterPro" id="IPR050992">
    <property type="entry name" value="CheZ_family_phosphatases"/>
</dbReference>
<dbReference type="NCBIfam" id="NF008368">
    <property type="entry name" value="PRK11166.1"/>
    <property type="match status" value="1"/>
</dbReference>
<dbReference type="PANTHER" id="PTHR43693">
    <property type="entry name" value="PROTEIN PHOSPHATASE CHEZ"/>
    <property type="match status" value="1"/>
</dbReference>
<dbReference type="PANTHER" id="PTHR43693:SF1">
    <property type="entry name" value="PROTEIN PHOSPHATASE CHEZ"/>
    <property type="match status" value="1"/>
</dbReference>
<dbReference type="Pfam" id="PF04344">
    <property type="entry name" value="CheZ"/>
    <property type="match status" value="1"/>
</dbReference>
<dbReference type="PIRSF" id="PIRSF002884">
    <property type="entry name" value="CheZ"/>
    <property type="match status" value="1"/>
</dbReference>
<dbReference type="SUPFAM" id="SSF75708">
    <property type="entry name" value="Chemotaxis phosphatase CheZ"/>
    <property type="match status" value="1"/>
</dbReference>
<keyword id="KW-0145">Chemotaxis</keyword>
<keyword id="KW-0963">Cytoplasm</keyword>
<keyword id="KW-0283">Flagellar rotation</keyword>
<keyword id="KW-0378">Hydrolase</keyword>
<keyword id="KW-0904">Protein phosphatase</keyword>
<keyword id="KW-1185">Reference proteome</keyword>
<protein>
    <recommendedName>
        <fullName>Protein phosphatase CheZ</fullName>
        <ecNumber>3.1.3.-</ecNumber>
    </recommendedName>
    <alternativeName>
        <fullName>Chemotaxis protein CheZ</fullName>
    </alternativeName>
</protein>
<reference key="1">
    <citation type="submission" date="2007-10" db="EMBL/GenBank/DDBJ databases">
        <title>Complete sequence of chromosome 1 of Burkholderia multivorans ATCC 17616.</title>
        <authorList>
            <person name="Copeland A."/>
            <person name="Lucas S."/>
            <person name="Lapidus A."/>
            <person name="Barry K."/>
            <person name="Glavina del Rio T."/>
            <person name="Dalin E."/>
            <person name="Tice H."/>
            <person name="Pitluck S."/>
            <person name="Chain P."/>
            <person name="Malfatti S."/>
            <person name="Shin M."/>
            <person name="Vergez L."/>
            <person name="Schmutz J."/>
            <person name="Larimer F."/>
            <person name="Land M."/>
            <person name="Hauser L."/>
            <person name="Kyrpides N."/>
            <person name="Kim E."/>
            <person name="Tiedje J."/>
            <person name="Richardson P."/>
        </authorList>
    </citation>
    <scope>NUCLEOTIDE SEQUENCE [LARGE SCALE GENOMIC DNA]</scope>
    <source>
        <strain>ATCC 17616 / 249</strain>
    </source>
</reference>
<reference key="2">
    <citation type="submission" date="2007-04" db="EMBL/GenBank/DDBJ databases">
        <title>Complete genome sequence of Burkholderia multivorans ATCC 17616.</title>
        <authorList>
            <person name="Ohtsubo Y."/>
            <person name="Yamashita A."/>
            <person name="Kurokawa K."/>
            <person name="Takami H."/>
            <person name="Yuhara S."/>
            <person name="Nishiyama E."/>
            <person name="Endo R."/>
            <person name="Miyazaki R."/>
            <person name="Ono A."/>
            <person name="Yano K."/>
            <person name="Ito M."/>
            <person name="Sota M."/>
            <person name="Yuji N."/>
            <person name="Hattori M."/>
            <person name="Tsuda M."/>
        </authorList>
    </citation>
    <scope>NUCLEOTIDE SEQUENCE [LARGE SCALE GENOMIC DNA]</scope>
    <source>
        <strain>ATCC 17616 / 249</strain>
    </source>
</reference>
<name>CHEZ_BURM1</name>
<evidence type="ECO:0000250" key="1"/>
<evidence type="ECO:0000256" key="2">
    <source>
        <dbReference type="SAM" id="MobiDB-lite"/>
    </source>
</evidence>
<evidence type="ECO:0000305" key="3"/>
<gene>
    <name type="primary">cheZ</name>
    <name type="ordered locus">Bmul_0172</name>
    <name type="ordered locus">BMULJ_03092</name>
</gene>
<comment type="function">
    <text evidence="1">Plays an important role in bacterial chemotaxis signal transduction pathway by accelerating the dephosphorylation of phosphorylated CheY (CheY-P).</text>
</comment>
<comment type="subunit">
    <text evidence="1">Homodimer.</text>
</comment>
<comment type="subcellular location">
    <subcellularLocation>
        <location evidence="1">Cytoplasm</location>
    </subcellularLocation>
</comment>
<comment type="similarity">
    <text evidence="3">Belongs to the CheZ family.</text>
</comment>
<organism>
    <name type="scientific">Burkholderia multivorans (strain ATCC 17616 / 249)</name>
    <dbReference type="NCBI Taxonomy" id="395019"/>
    <lineage>
        <taxon>Bacteria</taxon>
        <taxon>Pseudomonadati</taxon>
        <taxon>Pseudomonadota</taxon>
        <taxon>Betaproteobacteria</taxon>
        <taxon>Burkholderiales</taxon>
        <taxon>Burkholderiaceae</taxon>
        <taxon>Burkholderia</taxon>
        <taxon>Burkholderia cepacia complex</taxon>
    </lineage>
</organism>